<name>RL6_HYDCU</name>
<reference key="1">
    <citation type="journal article" date="2006" name="PLoS Biol.">
        <title>The genome of deep-sea vent chemolithoautotroph Thiomicrospira crunogena XCL-2.</title>
        <authorList>
            <person name="Scott K.M."/>
            <person name="Sievert S.M."/>
            <person name="Abril F.N."/>
            <person name="Ball L.A."/>
            <person name="Barrett C.J."/>
            <person name="Blake R.A."/>
            <person name="Boller A.J."/>
            <person name="Chain P.S.G."/>
            <person name="Clark J.A."/>
            <person name="Davis C.R."/>
            <person name="Detter C."/>
            <person name="Do K.F."/>
            <person name="Dobrinski K.P."/>
            <person name="Faza B.I."/>
            <person name="Fitzpatrick K.A."/>
            <person name="Freyermuth S.K."/>
            <person name="Harmer T.L."/>
            <person name="Hauser L.J."/>
            <person name="Huegler M."/>
            <person name="Kerfeld C.A."/>
            <person name="Klotz M.G."/>
            <person name="Kong W.W."/>
            <person name="Land M."/>
            <person name="Lapidus A."/>
            <person name="Larimer F.W."/>
            <person name="Longo D.L."/>
            <person name="Lucas S."/>
            <person name="Malfatti S.A."/>
            <person name="Massey S.E."/>
            <person name="Martin D.D."/>
            <person name="McCuddin Z."/>
            <person name="Meyer F."/>
            <person name="Moore J.L."/>
            <person name="Ocampo L.H. Jr."/>
            <person name="Paul J.H."/>
            <person name="Paulsen I.T."/>
            <person name="Reep D.K."/>
            <person name="Ren Q."/>
            <person name="Ross R.L."/>
            <person name="Sato P.Y."/>
            <person name="Thomas P."/>
            <person name="Tinkham L.E."/>
            <person name="Zeruth G.T."/>
        </authorList>
    </citation>
    <scope>NUCLEOTIDE SEQUENCE [LARGE SCALE GENOMIC DNA]</scope>
    <source>
        <strain>DSM 25203 / XCL-2</strain>
    </source>
</reference>
<evidence type="ECO:0000255" key="1">
    <source>
        <dbReference type="HAMAP-Rule" id="MF_01365"/>
    </source>
</evidence>
<evidence type="ECO:0000305" key="2"/>
<accession>Q31IW7</accession>
<organism>
    <name type="scientific">Hydrogenovibrio crunogenus (strain DSM 25203 / XCL-2)</name>
    <name type="common">Thiomicrospira crunogena</name>
    <dbReference type="NCBI Taxonomy" id="317025"/>
    <lineage>
        <taxon>Bacteria</taxon>
        <taxon>Pseudomonadati</taxon>
        <taxon>Pseudomonadota</taxon>
        <taxon>Gammaproteobacteria</taxon>
        <taxon>Thiotrichales</taxon>
        <taxon>Piscirickettsiaceae</taxon>
        <taxon>Hydrogenovibrio</taxon>
    </lineage>
</organism>
<comment type="function">
    <text evidence="1">This protein binds to the 23S rRNA, and is important in its secondary structure. It is located near the subunit interface in the base of the L7/L12 stalk, and near the tRNA binding site of the peptidyltransferase center.</text>
</comment>
<comment type="subunit">
    <text evidence="1">Part of the 50S ribosomal subunit.</text>
</comment>
<comment type="similarity">
    <text evidence="1">Belongs to the universal ribosomal protein uL6 family.</text>
</comment>
<gene>
    <name evidence="1" type="primary">rplF</name>
    <name type="ordered locus">Tcr_0310</name>
</gene>
<proteinExistence type="inferred from homology"/>
<dbReference type="EMBL" id="CP000109">
    <property type="protein sequence ID" value="ABB40906.1"/>
    <property type="molecule type" value="Genomic_DNA"/>
</dbReference>
<dbReference type="SMR" id="Q31IW7"/>
<dbReference type="STRING" id="317025.Tcr_0310"/>
<dbReference type="KEGG" id="tcx:Tcr_0310"/>
<dbReference type="eggNOG" id="COG0097">
    <property type="taxonomic scope" value="Bacteria"/>
</dbReference>
<dbReference type="HOGENOM" id="CLU_065464_1_2_6"/>
<dbReference type="OrthoDB" id="9805007at2"/>
<dbReference type="GO" id="GO:0022625">
    <property type="term" value="C:cytosolic large ribosomal subunit"/>
    <property type="evidence" value="ECO:0007669"/>
    <property type="project" value="TreeGrafter"/>
</dbReference>
<dbReference type="GO" id="GO:0019843">
    <property type="term" value="F:rRNA binding"/>
    <property type="evidence" value="ECO:0007669"/>
    <property type="project" value="UniProtKB-UniRule"/>
</dbReference>
<dbReference type="GO" id="GO:0003735">
    <property type="term" value="F:structural constituent of ribosome"/>
    <property type="evidence" value="ECO:0007669"/>
    <property type="project" value="InterPro"/>
</dbReference>
<dbReference type="GO" id="GO:0002181">
    <property type="term" value="P:cytoplasmic translation"/>
    <property type="evidence" value="ECO:0007669"/>
    <property type="project" value="TreeGrafter"/>
</dbReference>
<dbReference type="FunFam" id="3.90.930.12:FF:000001">
    <property type="entry name" value="50S ribosomal protein L6"/>
    <property type="match status" value="1"/>
</dbReference>
<dbReference type="FunFam" id="3.90.930.12:FF:000002">
    <property type="entry name" value="50S ribosomal protein L6"/>
    <property type="match status" value="1"/>
</dbReference>
<dbReference type="Gene3D" id="3.90.930.12">
    <property type="entry name" value="Ribosomal protein L6, alpha-beta domain"/>
    <property type="match status" value="2"/>
</dbReference>
<dbReference type="HAMAP" id="MF_01365_B">
    <property type="entry name" value="Ribosomal_uL6_B"/>
    <property type="match status" value="1"/>
</dbReference>
<dbReference type="InterPro" id="IPR000702">
    <property type="entry name" value="Ribosomal_uL6-like"/>
</dbReference>
<dbReference type="InterPro" id="IPR036789">
    <property type="entry name" value="Ribosomal_uL6-like_a/b-dom_sf"/>
</dbReference>
<dbReference type="InterPro" id="IPR020040">
    <property type="entry name" value="Ribosomal_uL6_a/b-dom"/>
</dbReference>
<dbReference type="InterPro" id="IPR019906">
    <property type="entry name" value="Ribosomal_uL6_bac-type"/>
</dbReference>
<dbReference type="InterPro" id="IPR002358">
    <property type="entry name" value="Ribosomal_uL6_CS"/>
</dbReference>
<dbReference type="NCBIfam" id="TIGR03654">
    <property type="entry name" value="L6_bact"/>
    <property type="match status" value="1"/>
</dbReference>
<dbReference type="PANTHER" id="PTHR11655">
    <property type="entry name" value="60S/50S RIBOSOMAL PROTEIN L6/L9"/>
    <property type="match status" value="1"/>
</dbReference>
<dbReference type="PANTHER" id="PTHR11655:SF14">
    <property type="entry name" value="LARGE RIBOSOMAL SUBUNIT PROTEIN UL6M"/>
    <property type="match status" value="1"/>
</dbReference>
<dbReference type="Pfam" id="PF00347">
    <property type="entry name" value="Ribosomal_L6"/>
    <property type="match status" value="2"/>
</dbReference>
<dbReference type="PIRSF" id="PIRSF002162">
    <property type="entry name" value="Ribosomal_L6"/>
    <property type="match status" value="1"/>
</dbReference>
<dbReference type="PRINTS" id="PR00059">
    <property type="entry name" value="RIBOSOMALL6"/>
</dbReference>
<dbReference type="SUPFAM" id="SSF56053">
    <property type="entry name" value="Ribosomal protein L6"/>
    <property type="match status" value="2"/>
</dbReference>
<dbReference type="PROSITE" id="PS00525">
    <property type="entry name" value="RIBOSOMAL_L6_1"/>
    <property type="match status" value="1"/>
</dbReference>
<protein>
    <recommendedName>
        <fullName evidence="1">Large ribosomal subunit protein uL6</fullName>
    </recommendedName>
    <alternativeName>
        <fullName evidence="2">50S ribosomal protein L6</fullName>
    </alternativeName>
</protein>
<keyword id="KW-0687">Ribonucleoprotein</keyword>
<keyword id="KW-0689">Ribosomal protein</keyword>
<keyword id="KW-0694">RNA-binding</keyword>
<keyword id="KW-0699">rRNA-binding</keyword>
<feature type="chain" id="PRO_0000260970" description="Large ribosomal subunit protein uL6">
    <location>
        <begin position="1"/>
        <end position="177"/>
    </location>
</feature>
<sequence length="177" mass="18869">MSRIAKSPITLPSGVDVTINGTDVSVKGSKGALSKTFNHAVSVSLEDGVVTVAPKNESKNAWAQAGTARSIINNMVLGVTEGFEKKLQLVGVGYRAQAQGKVLNLTLGFSHPVNHELPEGVTVETPSQTEIVVKGADKQVVGQVAAEIRGYRPPEPYKGKGVKYADEYILRKEAKKK</sequence>